<proteinExistence type="inferred from homology"/>
<evidence type="ECO:0000255" key="1">
    <source>
        <dbReference type="HAMAP-Rule" id="MF_00151"/>
    </source>
</evidence>
<sequence>MNAVFPGSFDPITSGHMDVLTRASRIFEHVTVTVMHNARKQGRHLFSLEERLEILREATAHLPNVSVDSFSGLLVDYMRQQQKGIIVRGLRAVSDYEYELQIAHLNRQIGEVETVFIMAATRWSFVSSTMVKEIASYGGDISEMVPRASAAALKRKFAQQYAAREAELSSAGERGAQQAAESKT</sequence>
<accession>Q1J1P5</accession>
<comment type="function">
    <text evidence="1">Reversibly transfers an adenylyl group from ATP to 4'-phosphopantetheine, yielding dephospho-CoA (dPCoA) and pyrophosphate.</text>
</comment>
<comment type="catalytic activity">
    <reaction evidence="1">
        <text>(R)-4'-phosphopantetheine + ATP + H(+) = 3'-dephospho-CoA + diphosphate</text>
        <dbReference type="Rhea" id="RHEA:19801"/>
        <dbReference type="ChEBI" id="CHEBI:15378"/>
        <dbReference type="ChEBI" id="CHEBI:30616"/>
        <dbReference type="ChEBI" id="CHEBI:33019"/>
        <dbReference type="ChEBI" id="CHEBI:57328"/>
        <dbReference type="ChEBI" id="CHEBI:61723"/>
        <dbReference type="EC" id="2.7.7.3"/>
    </reaction>
</comment>
<comment type="cofactor">
    <cofactor evidence="1">
        <name>Mg(2+)</name>
        <dbReference type="ChEBI" id="CHEBI:18420"/>
    </cofactor>
</comment>
<comment type="pathway">
    <text evidence="1">Cofactor biosynthesis; coenzyme A biosynthesis; CoA from (R)-pantothenate: step 4/5.</text>
</comment>
<comment type="subunit">
    <text evidence="1">Homohexamer.</text>
</comment>
<comment type="subcellular location">
    <subcellularLocation>
        <location evidence="1">Cytoplasm</location>
    </subcellularLocation>
</comment>
<comment type="similarity">
    <text evidence="1">Belongs to the bacterial CoaD family.</text>
</comment>
<protein>
    <recommendedName>
        <fullName evidence="1">Phosphopantetheine adenylyltransferase</fullName>
        <ecNumber evidence="1">2.7.7.3</ecNumber>
    </recommendedName>
    <alternativeName>
        <fullName evidence="1">Dephospho-CoA pyrophosphorylase</fullName>
    </alternativeName>
    <alternativeName>
        <fullName evidence="1">Pantetheine-phosphate adenylyltransferase</fullName>
        <shortName evidence="1">PPAT</shortName>
    </alternativeName>
</protein>
<organism>
    <name type="scientific">Deinococcus geothermalis (strain DSM 11300 / CIP 105573 / AG-3a)</name>
    <dbReference type="NCBI Taxonomy" id="319795"/>
    <lineage>
        <taxon>Bacteria</taxon>
        <taxon>Thermotogati</taxon>
        <taxon>Deinococcota</taxon>
        <taxon>Deinococci</taxon>
        <taxon>Deinococcales</taxon>
        <taxon>Deinococcaceae</taxon>
        <taxon>Deinococcus</taxon>
    </lineage>
</organism>
<dbReference type="EC" id="2.7.7.3" evidence="1"/>
<dbReference type="EMBL" id="CP000359">
    <property type="protein sequence ID" value="ABF44589.1"/>
    <property type="molecule type" value="Genomic_DNA"/>
</dbReference>
<dbReference type="RefSeq" id="WP_011529434.1">
    <property type="nucleotide sequence ID" value="NC_008025.1"/>
</dbReference>
<dbReference type="SMR" id="Q1J1P5"/>
<dbReference type="STRING" id="319795.Dgeo_0286"/>
<dbReference type="KEGG" id="dge:Dgeo_0286"/>
<dbReference type="eggNOG" id="COG0669">
    <property type="taxonomic scope" value="Bacteria"/>
</dbReference>
<dbReference type="HOGENOM" id="CLU_100149_0_1_0"/>
<dbReference type="UniPathway" id="UPA00241">
    <property type="reaction ID" value="UER00355"/>
</dbReference>
<dbReference type="Proteomes" id="UP000002431">
    <property type="component" value="Chromosome"/>
</dbReference>
<dbReference type="GO" id="GO:0005737">
    <property type="term" value="C:cytoplasm"/>
    <property type="evidence" value="ECO:0007669"/>
    <property type="project" value="UniProtKB-SubCell"/>
</dbReference>
<dbReference type="GO" id="GO:0005524">
    <property type="term" value="F:ATP binding"/>
    <property type="evidence" value="ECO:0007669"/>
    <property type="project" value="UniProtKB-KW"/>
</dbReference>
<dbReference type="GO" id="GO:0004595">
    <property type="term" value="F:pantetheine-phosphate adenylyltransferase activity"/>
    <property type="evidence" value="ECO:0007669"/>
    <property type="project" value="UniProtKB-UniRule"/>
</dbReference>
<dbReference type="GO" id="GO:0015937">
    <property type="term" value="P:coenzyme A biosynthetic process"/>
    <property type="evidence" value="ECO:0007669"/>
    <property type="project" value="UniProtKB-UniRule"/>
</dbReference>
<dbReference type="CDD" id="cd02163">
    <property type="entry name" value="PPAT"/>
    <property type="match status" value="1"/>
</dbReference>
<dbReference type="Gene3D" id="3.40.50.620">
    <property type="entry name" value="HUPs"/>
    <property type="match status" value="1"/>
</dbReference>
<dbReference type="HAMAP" id="MF_00151">
    <property type="entry name" value="PPAT_bact"/>
    <property type="match status" value="1"/>
</dbReference>
<dbReference type="InterPro" id="IPR004821">
    <property type="entry name" value="Cyt_trans-like"/>
</dbReference>
<dbReference type="InterPro" id="IPR001980">
    <property type="entry name" value="PPAT"/>
</dbReference>
<dbReference type="InterPro" id="IPR014729">
    <property type="entry name" value="Rossmann-like_a/b/a_fold"/>
</dbReference>
<dbReference type="NCBIfam" id="TIGR01510">
    <property type="entry name" value="coaD_prev_kdtB"/>
    <property type="match status" value="1"/>
</dbReference>
<dbReference type="NCBIfam" id="TIGR00125">
    <property type="entry name" value="cyt_tran_rel"/>
    <property type="match status" value="1"/>
</dbReference>
<dbReference type="PANTHER" id="PTHR21342">
    <property type="entry name" value="PHOSPHOPANTETHEINE ADENYLYLTRANSFERASE"/>
    <property type="match status" value="1"/>
</dbReference>
<dbReference type="PANTHER" id="PTHR21342:SF1">
    <property type="entry name" value="PHOSPHOPANTETHEINE ADENYLYLTRANSFERASE"/>
    <property type="match status" value="1"/>
</dbReference>
<dbReference type="Pfam" id="PF01467">
    <property type="entry name" value="CTP_transf_like"/>
    <property type="match status" value="1"/>
</dbReference>
<dbReference type="PRINTS" id="PR01020">
    <property type="entry name" value="LPSBIOSNTHSS"/>
</dbReference>
<dbReference type="SUPFAM" id="SSF52374">
    <property type="entry name" value="Nucleotidylyl transferase"/>
    <property type="match status" value="1"/>
</dbReference>
<feature type="chain" id="PRO_1000011135" description="Phosphopantetheine adenylyltransferase">
    <location>
        <begin position="1"/>
        <end position="184"/>
    </location>
</feature>
<feature type="binding site" evidence="1">
    <location>
        <begin position="8"/>
        <end position="9"/>
    </location>
    <ligand>
        <name>ATP</name>
        <dbReference type="ChEBI" id="CHEBI:30616"/>
    </ligand>
</feature>
<feature type="binding site" evidence="1">
    <location>
        <position position="8"/>
    </location>
    <ligand>
        <name>substrate</name>
    </ligand>
</feature>
<feature type="binding site" evidence="1">
    <location>
        <position position="16"/>
    </location>
    <ligand>
        <name>ATP</name>
        <dbReference type="ChEBI" id="CHEBI:30616"/>
    </ligand>
</feature>
<feature type="binding site" evidence="1">
    <location>
        <position position="40"/>
    </location>
    <ligand>
        <name>substrate</name>
    </ligand>
</feature>
<feature type="binding site" evidence="1">
    <location>
        <position position="74"/>
    </location>
    <ligand>
        <name>substrate</name>
    </ligand>
</feature>
<feature type="binding site" evidence="1">
    <location>
        <position position="88"/>
    </location>
    <ligand>
        <name>substrate</name>
    </ligand>
</feature>
<feature type="binding site" evidence="1">
    <location>
        <begin position="89"/>
        <end position="91"/>
    </location>
    <ligand>
        <name>ATP</name>
        <dbReference type="ChEBI" id="CHEBI:30616"/>
    </ligand>
</feature>
<feature type="binding site" evidence="1">
    <location>
        <position position="99"/>
    </location>
    <ligand>
        <name>ATP</name>
        <dbReference type="ChEBI" id="CHEBI:30616"/>
    </ligand>
</feature>
<feature type="binding site" evidence="1">
    <location>
        <begin position="123"/>
        <end position="129"/>
    </location>
    <ligand>
        <name>ATP</name>
        <dbReference type="ChEBI" id="CHEBI:30616"/>
    </ligand>
</feature>
<feature type="site" description="Transition state stabilizer" evidence="1">
    <location>
        <position position="16"/>
    </location>
</feature>
<reference key="1">
    <citation type="submission" date="2006-04" db="EMBL/GenBank/DDBJ databases">
        <title>Complete sequence of chromosome of Deinococcus geothermalis DSM 11300.</title>
        <authorList>
            <person name="Copeland A."/>
            <person name="Lucas S."/>
            <person name="Lapidus A."/>
            <person name="Barry K."/>
            <person name="Detter J.C."/>
            <person name="Glavina del Rio T."/>
            <person name="Hammon N."/>
            <person name="Israni S."/>
            <person name="Dalin E."/>
            <person name="Tice H."/>
            <person name="Pitluck S."/>
            <person name="Brettin T."/>
            <person name="Bruce D."/>
            <person name="Han C."/>
            <person name="Tapia R."/>
            <person name="Saunders E."/>
            <person name="Gilna P."/>
            <person name="Schmutz J."/>
            <person name="Larimer F."/>
            <person name="Land M."/>
            <person name="Hauser L."/>
            <person name="Kyrpides N."/>
            <person name="Kim E."/>
            <person name="Daly M.J."/>
            <person name="Fredrickson J.K."/>
            <person name="Makarova K.S."/>
            <person name="Gaidamakova E.K."/>
            <person name="Zhai M."/>
            <person name="Richardson P."/>
        </authorList>
    </citation>
    <scope>NUCLEOTIDE SEQUENCE [LARGE SCALE GENOMIC DNA]</scope>
    <source>
        <strain>DSM 11300 / CIP 105573 / AG-3a</strain>
    </source>
</reference>
<gene>
    <name evidence="1" type="primary">coaD</name>
    <name type="ordered locus">Dgeo_0286</name>
</gene>
<name>COAD_DEIGD</name>
<keyword id="KW-0067">ATP-binding</keyword>
<keyword id="KW-0173">Coenzyme A biosynthesis</keyword>
<keyword id="KW-0963">Cytoplasm</keyword>
<keyword id="KW-0460">Magnesium</keyword>
<keyword id="KW-0547">Nucleotide-binding</keyword>
<keyword id="KW-0548">Nucleotidyltransferase</keyword>
<keyword id="KW-0808">Transferase</keyword>